<proteinExistence type="inferred from homology"/>
<keyword id="KW-0833">Ubl conjugation pathway</keyword>
<protein>
    <recommendedName>
        <fullName>Defective in cullin neddylation protein 1</fullName>
    </recommendedName>
</protein>
<accession>P0CN07</accession>
<accession>Q55UJ4</accession>
<accession>Q5KHV1</accession>
<evidence type="ECO:0000250" key="1"/>
<evidence type="ECO:0000255" key="2">
    <source>
        <dbReference type="PROSITE-ProRule" id="PRU00574"/>
    </source>
</evidence>
<evidence type="ECO:0000305" key="3"/>
<reference key="1">
    <citation type="journal article" date="2005" name="Science">
        <title>The genome of the basidiomycetous yeast and human pathogen Cryptococcus neoformans.</title>
        <authorList>
            <person name="Loftus B.J."/>
            <person name="Fung E."/>
            <person name="Roncaglia P."/>
            <person name="Rowley D."/>
            <person name="Amedeo P."/>
            <person name="Bruno D."/>
            <person name="Vamathevan J."/>
            <person name="Miranda M."/>
            <person name="Anderson I.J."/>
            <person name="Fraser J.A."/>
            <person name="Allen J.E."/>
            <person name="Bosdet I.E."/>
            <person name="Brent M.R."/>
            <person name="Chiu R."/>
            <person name="Doering T.L."/>
            <person name="Donlin M.J."/>
            <person name="D'Souza C.A."/>
            <person name="Fox D.S."/>
            <person name="Grinberg V."/>
            <person name="Fu J."/>
            <person name="Fukushima M."/>
            <person name="Haas B.J."/>
            <person name="Huang J.C."/>
            <person name="Janbon G."/>
            <person name="Jones S.J.M."/>
            <person name="Koo H.L."/>
            <person name="Krzywinski M.I."/>
            <person name="Kwon-Chung K.J."/>
            <person name="Lengeler K.B."/>
            <person name="Maiti R."/>
            <person name="Marra M.A."/>
            <person name="Marra R.E."/>
            <person name="Mathewson C.A."/>
            <person name="Mitchell T.G."/>
            <person name="Pertea M."/>
            <person name="Riggs F.R."/>
            <person name="Salzberg S.L."/>
            <person name="Schein J.E."/>
            <person name="Shvartsbeyn A."/>
            <person name="Shin H."/>
            <person name="Shumway M."/>
            <person name="Specht C.A."/>
            <person name="Suh B.B."/>
            <person name="Tenney A."/>
            <person name="Utterback T.R."/>
            <person name="Wickes B.L."/>
            <person name="Wortman J.R."/>
            <person name="Wye N.H."/>
            <person name="Kronstad J.W."/>
            <person name="Lodge J.K."/>
            <person name="Heitman J."/>
            <person name="Davis R.W."/>
            <person name="Fraser C.M."/>
            <person name="Hyman R.W."/>
        </authorList>
    </citation>
    <scope>NUCLEOTIDE SEQUENCE [LARGE SCALE GENOMIC DNA]</scope>
    <source>
        <strain>B-3501A</strain>
    </source>
</reference>
<sequence length="279" mass="31369">MASIVSPLSTKDSLLVTQFRAITGTSSAEAAKYIKRYKHIEAAVDAFYNNEPAPRADPAQERKLGEIWEKFKDPSDPKLIKIDGTMELCEELDIDPGTDAVLFCLAADLGSKATGEWEKAPFVAGIASYPGNIDSLPKLKAYLPTLRKKLVSDPEYFKKVYNHAFQLARGGPQSLTRSLPLDTAIDLWTLFFPPAFNHSPSALSHLPDNSPPQFTQPEFDLWIEFMQQKNKAVSKDTWALLVDFARGIDKDFKEYDEDGAWPSMIDDFVEYVREQKRGQ</sequence>
<dbReference type="EMBL" id="AAEY01000019">
    <property type="protein sequence ID" value="EAL21418.1"/>
    <property type="status" value="ALT_SEQ"/>
    <property type="molecule type" value="Genomic_DNA"/>
</dbReference>
<dbReference type="RefSeq" id="XP_776065.1">
    <property type="nucleotide sequence ID" value="XM_770972.1"/>
</dbReference>
<dbReference type="SMR" id="P0CN07"/>
<dbReference type="EnsemblFungi" id="AAW43195">
    <property type="protein sequence ID" value="AAW43195"/>
    <property type="gene ID" value="CND05210"/>
</dbReference>
<dbReference type="GeneID" id="4935502"/>
<dbReference type="KEGG" id="cnb:CNBD1130"/>
<dbReference type="HOGENOM" id="CLU_047042_0_0_1"/>
<dbReference type="OrthoDB" id="626at5206"/>
<dbReference type="GO" id="GO:0000151">
    <property type="term" value="C:ubiquitin ligase complex"/>
    <property type="evidence" value="ECO:0007669"/>
    <property type="project" value="TreeGrafter"/>
</dbReference>
<dbReference type="GO" id="GO:0097602">
    <property type="term" value="F:cullin family protein binding"/>
    <property type="evidence" value="ECO:0007669"/>
    <property type="project" value="TreeGrafter"/>
</dbReference>
<dbReference type="GO" id="GO:0031624">
    <property type="term" value="F:ubiquitin conjugating enzyme binding"/>
    <property type="evidence" value="ECO:0007669"/>
    <property type="project" value="TreeGrafter"/>
</dbReference>
<dbReference type="GO" id="GO:0032182">
    <property type="term" value="F:ubiquitin-like protein binding"/>
    <property type="evidence" value="ECO:0007669"/>
    <property type="project" value="TreeGrafter"/>
</dbReference>
<dbReference type="GO" id="GO:0045116">
    <property type="term" value="P:protein neddylation"/>
    <property type="evidence" value="ECO:0007669"/>
    <property type="project" value="TreeGrafter"/>
</dbReference>
<dbReference type="Gene3D" id="1.10.238.200">
    <property type="entry name" value="Cullin, PONY binding domain"/>
    <property type="match status" value="1"/>
</dbReference>
<dbReference type="Gene3D" id="1.10.238.10">
    <property type="entry name" value="EF-hand"/>
    <property type="match status" value="1"/>
</dbReference>
<dbReference type="InterPro" id="IPR014764">
    <property type="entry name" value="DCN-prot"/>
</dbReference>
<dbReference type="InterPro" id="IPR042460">
    <property type="entry name" value="DCN1-like_PONY"/>
</dbReference>
<dbReference type="InterPro" id="IPR005176">
    <property type="entry name" value="PONY_dom"/>
</dbReference>
<dbReference type="PANTHER" id="PTHR12281:SF31">
    <property type="entry name" value="DCN1-LIKE PROTEIN 3"/>
    <property type="match status" value="1"/>
</dbReference>
<dbReference type="PANTHER" id="PTHR12281">
    <property type="entry name" value="RP42 RELATED"/>
    <property type="match status" value="1"/>
</dbReference>
<dbReference type="Pfam" id="PF03556">
    <property type="entry name" value="Cullin_binding"/>
    <property type="match status" value="1"/>
</dbReference>
<dbReference type="Pfam" id="PF14555">
    <property type="entry name" value="UBA_4"/>
    <property type="match status" value="1"/>
</dbReference>
<dbReference type="PROSITE" id="PS51229">
    <property type="entry name" value="DCUN1"/>
    <property type="match status" value="1"/>
</dbReference>
<name>DCN1_CRYNB</name>
<feature type="chain" id="PRO_0000410057" description="Defective in cullin neddylation protein 1">
    <location>
        <begin position="1"/>
        <end position="279"/>
    </location>
</feature>
<feature type="domain" description="UBA-like">
    <location>
        <begin position="12"/>
        <end position="48"/>
    </location>
</feature>
<feature type="domain" description="DCUN1" evidence="2">
    <location>
        <begin position="59"/>
        <end position="273"/>
    </location>
</feature>
<organism>
    <name type="scientific">Cryptococcus neoformans var. neoformans serotype D (strain B-3501A)</name>
    <name type="common">Filobasidiella neoformans</name>
    <dbReference type="NCBI Taxonomy" id="283643"/>
    <lineage>
        <taxon>Eukaryota</taxon>
        <taxon>Fungi</taxon>
        <taxon>Dikarya</taxon>
        <taxon>Basidiomycota</taxon>
        <taxon>Agaricomycotina</taxon>
        <taxon>Tremellomycetes</taxon>
        <taxon>Tremellales</taxon>
        <taxon>Cryptococcaceae</taxon>
        <taxon>Cryptococcus</taxon>
        <taxon>Cryptococcus neoformans species complex</taxon>
    </lineage>
</organism>
<comment type="function">
    <text evidence="1">May contribute to neddylation of cullin components of SCF-type E3 ubiquitin ligase complexes. Neddylation of cullins play an essential role in the regulation of SCF-type complexes activity (By similarity).</text>
</comment>
<comment type="sequence caution" evidence="3">
    <conflict type="erroneous gene model prediction">
        <sequence resource="EMBL-CDS" id="EAL21418"/>
    </conflict>
</comment>
<gene>
    <name type="primary">DCN1</name>
    <name type="ordered locus">CNBD1130</name>
</gene>